<protein>
    <recommendedName>
        <fullName evidence="1">Glutamate--tRNA ligase</fullName>
        <ecNumber evidence="1">6.1.1.17</ecNumber>
    </recommendedName>
    <alternativeName>
        <fullName evidence="1">Glutamyl-tRNA synthetase</fullName>
        <shortName evidence="1">GluRS</shortName>
    </alternativeName>
</protein>
<accession>Q65VB3</accession>
<organism>
    <name type="scientific">Mannheimia succiniciproducens (strain KCTC 0769BP / MBEL55E)</name>
    <dbReference type="NCBI Taxonomy" id="221988"/>
    <lineage>
        <taxon>Bacteria</taxon>
        <taxon>Pseudomonadati</taxon>
        <taxon>Pseudomonadota</taxon>
        <taxon>Gammaproteobacteria</taxon>
        <taxon>Pasteurellales</taxon>
        <taxon>Pasteurellaceae</taxon>
        <taxon>Basfia</taxon>
    </lineage>
</organism>
<reference key="1">
    <citation type="journal article" date="2004" name="Nat. Biotechnol.">
        <title>The genome sequence of the capnophilic rumen bacterium Mannheimia succiniciproducens.</title>
        <authorList>
            <person name="Hong S.H."/>
            <person name="Kim J.S."/>
            <person name="Lee S.Y."/>
            <person name="In Y.H."/>
            <person name="Choi S.S."/>
            <person name="Rih J.-K."/>
            <person name="Kim C.H."/>
            <person name="Jeong H."/>
            <person name="Hur C.G."/>
            <person name="Kim J.J."/>
        </authorList>
    </citation>
    <scope>NUCLEOTIDE SEQUENCE [LARGE SCALE GENOMIC DNA]</scope>
    <source>
        <strain>KCTC 0769BP / MBEL55E</strain>
    </source>
</reference>
<name>SYE_MANSM</name>
<evidence type="ECO:0000255" key="1">
    <source>
        <dbReference type="HAMAP-Rule" id="MF_00022"/>
    </source>
</evidence>
<evidence type="ECO:0000305" key="2"/>
<comment type="function">
    <text evidence="1">Catalyzes the attachment of glutamate to tRNA(Glu) in a two-step reaction: glutamate is first activated by ATP to form Glu-AMP and then transferred to the acceptor end of tRNA(Glu).</text>
</comment>
<comment type="catalytic activity">
    <reaction evidence="1">
        <text>tRNA(Glu) + L-glutamate + ATP = L-glutamyl-tRNA(Glu) + AMP + diphosphate</text>
        <dbReference type="Rhea" id="RHEA:23540"/>
        <dbReference type="Rhea" id="RHEA-COMP:9663"/>
        <dbReference type="Rhea" id="RHEA-COMP:9680"/>
        <dbReference type="ChEBI" id="CHEBI:29985"/>
        <dbReference type="ChEBI" id="CHEBI:30616"/>
        <dbReference type="ChEBI" id="CHEBI:33019"/>
        <dbReference type="ChEBI" id="CHEBI:78442"/>
        <dbReference type="ChEBI" id="CHEBI:78520"/>
        <dbReference type="ChEBI" id="CHEBI:456215"/>
        <dbReference type="EC" id="6.1.1.17"/>
    </reaction>
</comment>
<comment type="cofactor">
    <cofactor evidence="1">
        <name>Zn(2+)</name>
        <dbReference type="ChEBI" id="CHEBI:29105"/>
    </cofactor>
    <text evidence="1">Binds 1 zinc ion per subunit.</text>
</comment>
<comment type="subunit">
    <text evidence="1">Monomer.</text>
</comment>
<comment type="subcellular location">
    <subcellularLocation>
        <location evidence="1">Cytoplasm</location>
    </subcellularLocation>
</comment>
<comment type="similarity">
    <text evidence="1">Belongs to the class-I aminoacyl-tRNA synthetase family. Glutamate--tRNA ligase type 1 subfamily.</text>
</comment>
<comment type="sequence caution" evidence="2">
    <conflict type="erroneous initiation">
        <sequence resource="EMBL-CDS" id="AAU37097"/>
    </conflict>
</comment>
<dbReference type="EC" id="6.1.1.17" evidence="1"/>
<dbReference type="EMBL" id="AE016827">
    <property type="protein sequence ID" value="AAU37097.1"/>
    <property type="status" value="ALT_INIT"/>
    <property type="molecule type" value="Genomic_DNA"/>
</dbReference>
<dbReference type="RefSeq" id="WP_041639542.1">
    <property type="nucleotide sequence ID" value="NC_006300.1"/>
</dbReference>
<dbReference type="SMR" id="Q65VB3"/>
<dbReference type="STRING" id="221988.MS0490"/>
<dbReference type="KEGG" id="msu:MS0490"/>
<dbReference type="eggNOG" id="COG0008">
    <property type="taxonomic scope" value="Bacteria"/>
</dbReference>
<dbReference type="HOGENOM" id="CLU_015768_6_0_6"/>
<dbReference type="OrthoDB" id="9807503at2"/>
<dbReference type="Proteomes" id="UP000000607">
    <property type="component" value="Chromosome"/>
</dbReference>
<dbReference type="GO" id="GO:0005829">
    <property type="term" value="C:cytosol"/>
    <property type="evidence" value="ECO:0007669"/>
    <property type="project" value="TreeGrafter"/>
</dbReference>
<dbReference type="GO" id="GO:0005524">
    <property type="term" value="F:ATP binding"/>
    <property type="evidence" value="ECO:0007669"/>
    <property type="project" value="UniProtKB-UniRule"/>
</dbReference>
<dbReference type="GO" id="GO:0004818">
    <property type="term" value="F:glutamate-tRNA ligase activity"/>
    <property type="evidence" value="ECO:0007669"/>
    <property type="project" value="UniProtKB-UniRule"/>
</dbReference>
<dbReference type="GO" id="GO:0000049">
    <property type="term" value="F:tRNA binding"/>
    <property type="evidence" value="ECO:0007669"/>
    <property type="project" value="InterPro"/>
</dbReference>
<dbReference type="GO" id="GO:0008270">
    <property type="term" value="F:zinc ion binding"/>
    <property type="evidence" value="ECO:0007669"/>
    <property type="project" value="InterPro"/>
</dbReference>
<dbReference type="GO" id="GO:0006424">
    <property type="term" value="P:glutamyl-tRNA aminoacylation"/>
    <property type="evidence" value="ECO:0007669"/>
    <property type="project" value="UniProtKB-UniRule"/>
</dbReference>
<dbReference type="CDD" id="cd00808">
    <property type="entry name" value="GluRS_core"/>
    <property type="match status" value="1"/>
</dbReference>
<dbReference type="FunFam" id="3.40.50.620:FF:000007">
    <property type="entry name" value="Glutamate--tRNA ligase"/>
    <property type="match status" value="1"/>
</dbReference>
<dbReference type="Gene3D" id="1.10.10.350">
    <property type="match status" value="1"/>
</dbReference>
<dbReference type="Gene3D" id="3.40.50.620">
    <property type="entry name" value="HUPs"/>
    <property type="match status" value="1"/>
</dbReference>
<dbReference type="HAMAP" id="MF_00022">
    <property type="entry name" value="Glu_tRNA_synth_type1"/>
    <property type="match status" value="1"/>
</dbReference>
<dbReference type="InterPro" id="IPR045462">
    <property type="entry name" value="aa-tRNA-synth_I_cd-bd"/>
</dbReference>
<dbReference type="InterPro" id="IPR020751">
    <property type="entry name" value="aa-tRNA-synth_I_codon-bd_sub2"/>
</dbReference>
<dbReference type="InterPro" id="IPR001412">
    <property type="entry name" value="aa-tRNA-synth_I_CS"/>
</dbReference>
<dbReference type="InterPro" id="IPR008925">
    <property type="entry name" value="aa_tRNA-synth_I_cd-bd_sf"/>
</dbReference>
<dbReference type="InterPro" id="IPR004527">
    <property type="entry name" value="Glu-tRNA-ligase_bac/mito"/>
</dbReference>
<dbReference type="InterPro" id="IPR000924">
    <property type="entry name" value="Glu/Gln-tRNA-synth"/>
</dbReference>
<dbReference type="InterPro" id="IPR020058">
    <property type="entry name" value="Glu/Gln-tRNA-synth_Ib_cat-dom"/>
</dbReference>
<dbReference type="InterPro" id="IPR049940">
    <property type="entry name" value="GluQ/Sye"/>
</dbReference>
<dbReference type="InterPro" id="IPR033910">
    <property type="entry name" value="GluRS_core"/>
</dbReference>
<dbReference type="InterPro" id="IPR014729">
    <property type="entry name" value="Rossmann-like_a/b/a_fold"/>
</dbReference>
<dbReference type="NCBIfam" id="TIGR00464">
    <property type="entry name" value="gltX_bact"/>
    <property type="match status" value="1"/>
</dbReference>
<dbReference type="PANTHER" id="PTHR43311">
    <property type="entry name" value="GLUTAMATE--TRNA LIGASE"/>
    <property type="match status" value="1"/>
</dbReference>
<dbReference type="PANTHER" id="PTHR43311:SF2">
    <property type="entry name" value="GLUTAMATE--TRNA LIGASE, MITOCHONDRIAL-RELATED"/>
    <property type="match status" value="1"/>
</dbReference>
<dbReference type="Pfam" id="PF19269">
    <property type="entry name" value="Anticodon_2"/>
    <property type="match status" value="1"/>
</dbReference>
<dbReference type="Pfam" id="PF00749">
    <property type="entry name" value="tRNA-synt_1c"/>
    <property type="match status" value="1"/>
</dbReference>
<dbReference type="PRINTS" id="PR00987">
    <property type="entry name" value="TRNASYNTHGLU"/>
</dbReference>
<dbReference type="SUPFAM" id="SSF48163">
    <property type="entry name" value="An anticodon-binding domain of class I aminoacyl-tRNA synthetases"/>
    <property type="match status" value="1"/>
</dbReference>
<dbReference type="SUPFAM" id="SSF52374">
    <property type="entry name" value="Nucleotidylyl transferase"/>
    <property type="match status" value="1"/>
</dbReference>
<dbReference type="PROSITE" id="PS00178">
    <property type="entry name" value="AA_TRNA_LIGASE_I"/>
    <property type="match status" value="1"/>
</dbReference>
<proteinExistence type="inferred from homology"/>
<gene>
    <name evidence="1" type="primary">gltX</name>
    <name type="ordered locus">MS0490</name>
</gene>
<feature type="chain" id="PRO_0000119595" description="Glutamate--tRNA ligase">
    <location>
        <begin position="1"/>
        <end position="480"/>
    </location>
</feature>
<feature type="short sequence motif" description="'HIGH' region" evidence="1">
    <location>
        <begin position="21"/>
        <end position="31"/>
    </location>
</feature>
<feature type="short sequence motif" description="'KMSKS' region" evidence="1">
    <location>
        <begin position="248"/>
        <end position="252"/>
    </location>
</feature>
<feature type="binding site" evidence="1">
    <location>
        <position position="110"/>
    </location>
    <ligand>
        <name>Zn(2+)</name>
        <dbReference type="ChEBI" id="CHEBI:29105"/>
    </ligand>
</feature>
<feature type="binding site" evidence="1">
    <location>
        <position position="112"/>
    </location>
    <ligand>
        <name>Zn(2+)</name>
        <dbReference type="ChEBI" id="CHEBI:29105"/>
    </ligand>
</feature>
<feature type="binding site" evidence="1">
    <location>
        <position position="137"/>
    </location>
    <ligand>
        <name>Zn(2+)</name>
        <dbReference type="ChEBI" id="CHEBI:29105"/>
    </ligand>
</feature>
<feature type="binding site" evidence="1">
    <location>
        <position position="139"/>
    </location>
    <ligand>
        <name>Zn(2+)</name>
        <dbReference type="ChEBI" id="CHEBI:29105"/>
    </ligand>
</feature>
<feature type="binding site" evidence="1">
    <location>
        <position position="251"/>
    </location>
    <ligand>
        <name>ATP</name>
        <dbReference type="ChEBI" id="CHEBI:30616"/>
    </ligand>
</feature>
<sequence length="480" mass="54588">MELKALFNLDPNVKVRTRFAPSPTGYLHVGGARTALYSWLYAKHNDGEFVLRIEDTDLERSTPEATAAILDAMEWLNLTWEHGPYFQTERFDRYNEVIDQMIEQGLAYRCYCSKERLEELRHQQEANKEKPRYDRHCLHDHEHSPYEPHVVRFKNPQEGSVVFEDAVRGRIEISNHELDDLIIRRSDGSPTYNFCVVVDDWDMGITHVVRGEDHINNTPRQINILKALGAPIPVYAHVSMINGDDGQKLSKRHGAVSVMQYRDEGYLPEALLNYLVRLGWGHGDQEIFTLEEMIKLFELEHVSKSASAFNTEKLLWLNQHYIRELPAEYVAQHLAWQYQEQGIDTSKGPALTEIVSMLGERCKTLKEMAASSRYFFEEFDGFDEAAAKKHLKAAAVEPLEKVKEKLTALSGWDAHSAHEAIEQTAAELEVGMGKVGMPLRVAVTGAGQSPSMDVTLAGIGRERVLARIQKAIDFIKAKNA</sequence>
<keyword id="KW-0030">Aminoacyl-tRNA synthetase</keyword>
<keyword id="KW-0067">ATP-binding</keyword>
<keyword id="KW-0963">Cytoplasm</keyword>
<keyword id="KW-0436">Ligase</keyword>
<keyword id="KW-0479">Metal-binding</keyword>
<keyword id="KW-0547">Nucleotide-binding</keyword>
<keyword id="KW-0648">Protein biosynthesis</keyword>
<keyword id="KW-0862">Zinc</keyword>